<protein>
    <recommendedName>
        <fullName>Alcohol dehydrogenase 2</fullName>
        <ecNumber>1.1.1.1</ecNumber>
    </recommendedName>
</protein>
<feature type="chain" id="PRO_0000277839" description="Alcohol dehydrogenase 2">
    <location>
        <begin position="1"/>
        <end position="258"/>
    </location>
</feature>
<feature type="active site" description="Proton acceptor" evidence="2">
    <location>
        <position position="150"/>
    </location>
</feature>
<feature type="binding site" evidence="1">
    <location>
        <begin position="9"/>
        <end position="33"/>
    </location>
    <ligand>
        <name>NAD(+)</name>
        <dbReference type="ChEBI" id="CHEBI:57540"/>
    </ligand>
</feature>
<feature type="binding site" evidence="1">
    <location>
        <position position="137"/>
    </location>
    <ligand>
        <name>substrate</name>
    </ligand>
</feature>
<comment type="catalytic activity">
    <reaction evidence="2">
        <text>a primary alcohol + NAD(+) = an aldehyde + NADH + H(+)</text>
        <dbReference type="Rhea" id="RHEA:10736"/>
        <dbReference type="ChEBI" id="CHEBI:15378"/>
        <dbReference type="ChEBI" id="CHEBI:15734"/>
        <dbReference type="ChEBI" id="CHEBI:17478"/>
        <dbReference type="ChEBI" id="CHEBI:57540"/>
        <dbReference type="ChEBI" id="CHEBI:57945"/>
        <dbReference type="EC" id="1.1.1.1"/>
    </reaction>
</comment>
<comment type="catalytic activity">
    <reaction evidence="2">
        <text>a secondary alcohol + NAD(+) = a ketone + NADH + H(+)</text>
        <dbReference type="Rhea" id="RHEA:10740"/>
        <dbReference type="ChEBI" id="CHEBI:15378"/>
        <dbReference type="ChEBI" id="CHEBI:17087"/>
        <dbReference type="ChEBI" id="CHEBI:35681"/>
        <dbReference type="ChEBI" id="CHEBI:57540"/>
        <dbReference type="ChEBI" id="CHEBI:57945"/>
        <dbReference type="EC" id="1.1.1.1"/>
    </reaction>
</comment>
<comment type="subunit">
    <text evidence="1">Homodimer.</text>
</comment>
<comment type="similarity">
    <text evidence="3">Belongs to the short-chain dehydrogenases/reductases (SDR) family.</text>
</comment>
<reference key="1">
    <citation type="journal article" date="2003" name="J. Mol. Evol.">
        <title>Exploring the evolutionary history of the alcohol dehydrogenase gene (Adh) duplication in species of the family tephritidae.</title>
        <authorList>
            <person name="Goulielmos G.N."/>
            <person name="Loukas M."/>
            <person name="Bondinas G."/>
            <person name="Zouros E."/>
        </authorList>
    </citation>
    <scope>NUCLEOTIDE SEQUENCE [GENOMIC DNA]</scope>
</reference>
<dbReference type="EC" id="1.1.1.1"/>
<dbReference type="EMBL" id="AJ539540">
    <property type="protein sequence ID" value="CAD62452.1"/>
    <property type="molecule type" value="Genomic_DNA"/>
</dbReference>
<dbReference type="SMR" id="Q70UP5"/>
<dbReference type="GO" id="GO:0005737">
    <property type="term" value="C:cytoplasm"/>
    <property type="evidence" value="ECO:0007669"/>
    <property type="project" value="TreeGrafter"/>
</dbReference>
<dbReference type="GO" id="GO:0004022">
    <property type="term" value="F:alcohol dehydrogenase (NAD+) activity"/>
    <property type="evidence" value="ECO:0000250"/>
    <property type="project" value="UniProtKB"/>
</dbReference>
<dbReference type="CDD" id="cd05323">
    <property type="entry name" value="ADH_SDR_c_like"/>
    <property type="match status" value="1"/>
</dbReference>
<dbReference type="FunFam" id="3.40.50.720:FF:000149">
    <property type="entry name" value="15-hydroxyprostaglandin dehydrogenase [NAD(+)]"/>
    <property type="match status" value="1"/>
</dbReference>
<dbReference type="Gene3D" id="3.40.50.720">
    <property type="entry name" value="NAD(P)-binding Rossmann-like Domain"/>
    <property type="match status" value="1"/>
</dbReference>
<dbReference type="InterPro" id="IPR002426">
    <property type="entry name" value="ADH_Ceratitis-type"/>
</dbReference>
<dbReference type="InterPro" id="IPR036291">
    <property type="entry name" value="NAD(P)-bd_dom_sf"/>
</dbReference>
<dbReference type="InterPro" id="IPR020904">
    <property type="entry name" value="Sc_DH/Rdtase_CS"/>
</dbReference>
<dbReference type="InterPro" id="IPR002347">
    <property type="entry name" value="SDR_fam"/>
</dbReference>
<dbReference type="PANTHER" id="PTHR44229">
    <property type="entry name" value="15-HYDROXYPROSTAGLANDIN DEHYDROGENASE [NAD(+)]"/>
    <property type="match status" value="1"/>
</dbReference>
<dbReference type="PANTHER" id="PTHR44229:SF8">
    <property type="entry name" value="ALCOHOL DEHYDROGENASE-RELATED"/>
    <property type="match status" value="1"/>
</dbReference>
<dbReference type="Pfam" id="PF00106">
    <property type="entry name" value="adh_short"/>
    <property type="match status" value="1"/>
</dbReference>
<dbReference type="PRINTS" id="PR01169">
    <property type="entry name" value="CERATITISADH"/>
</dbReference>
<dbReference type="PRINTS" id="PR01167">
    <property type="entry name" value="INSADHFAMILY"/>
</dbReference>
<dbReference type="PRINTS" id="PR00080">
    <property type="entry name" value="SDRFAMILY"/>
</dbReference>
<dbReference type="SUPFAM" id="SSF51735">
    <property type="entry name" value="NAD(P)-binding Rossmann-fold domains"/>
    <property type="match status" value="1"/>
</dbReference>
<dbReference type="PROSITE" id="PS00061">
    <property type="entry name" value="ADH_SHORT"/>
    <property type="match status" value="1"/>
</dbReference>
<keyword id="KW-0520">NAD</keyword>
<keyword id="KW-0560">Oxidoreductase</keyword>
<sequence>MGLSGKNVIFVGGLGFIGYEACKQLMAKNMASFFVFDVLDKPEDIKALQALNPKTKVYYTKFDITSKQSIKSALADVVSKVKYIDALINGAGILTDLNVELTMNINLIGLINTTLEALPLMDKNKQGRGGVIVNIASVLGLEPCPPAAVYCASKFGVMGFSRSIGDPYYYNITGVAVVTFCPGLTETPLKNNIGSKYTFEYSKKISEELNNTKTQKPEVCGAHLAQVVESHENGGIYISNQGTLAKVTPTVYWQPTYH</sequence>
<name>ADH2_CERCO</name>
<organism>
    <name type="scientific">Ceratitis cosyra</name>
    <name type="common">Mango fruit fly</name>
    <name type="synonym">Trypeta cosyra</name>
    <dbReference type="NCBI Taxonomy" id="194917"/>
    <lineage>
        <taxon>Eukaryota</taxon>
        <taxon>Metazoa</taxon>
        <taxon>Ecdysozoa</taxon>
        <taxon>Arthropoda</taxon>
        <taxon>Hexapoda</taxon>
        <taxon>Insecta</taxon>
        <taxon>Pterygota</taxon>
        <taxon>Neoptera</taxon>
        <taxon>Endopterygota</taxon>
        <taxon>Diptera</taxon>
        <taxon>Brachycera</taxon>
        <taxon>Muscomorpha</taxon>
        <taxon>Tephritoidea</taxon>
        <taxon>Tephritidae</taxon>
        <taxon>Ceratitis</taxon>
        <taxon>Ceratalaspis</taxon>
    </lineage>
</organism>
<evidence type="ECO:0000250" key="1"/>
<evidence type="ECO:0000255" key="2">
    <source>
        <dbReference type="PROSITE-ProRule" id="PRU10001"/>
    </source>
</evidence>
<evidence type="ECO:0000305" key="3"/>
<accession>Q70UP5</accession>
<gene>
    <name type="primary">ADH2</name>
</gene>
<proteinExistence type="inferred from homology"/>